<evidence type="ECO:0000255" key="1">
    <source>
        <dbReference type="HAMAP-Rule" id="MF_00682"/>
    </source>
</evidence>
<protein>
    <recommendedName>
        <fullName evidence="1">Co-chaperone protein HscB</fullName>
    </recommendedName>
    <alternativeName>
        <fullName evidence="1">Hsc20</fullName>
    </alternativeName>
</protein>
<organism>
    <name type="scientific">Yersinia pseudotuberculosis serotype O:3 (strain YPIII)</name>
    <dbReference type="NCBI Taxonomy" id="502800"/>
    <lineage>
        <taxon>Bacteria</taxon>
        <taxon>Pseudomonadati</taxon>
        <taxon>Pseudomonadota</taxon>
        <taxon>Gammaproteobacteria</taxon>
        <taxon>Enterobacterales</taxon>
        <taxon>Yersiniaceae</taxon>
        <taxon>Yersinia</taxon>
    </lineage>
</organism>
<accession>B1JRZ1</accession>
<dbReference type="EMBL" id="CP000950">
    <property type="protein sequence ID" value="ACA67577.1"/>
    <property type="molecule type" value="Genomic_DNA"/>
</dbReference>
<dbReference type="RefSeq" id="WP_002209833.1">
    <property type="nucleotide sequence ID" value="NZ_CP009792.1"/>
</dbReference>
<dbReference type="SMR" id="B1JRZ1"/>
<dbReference type="GeneID" id="57975850"/>
<dbReference type="KEGG" id="ypy:YPK_1279"/>
<dbReference type="PATRIC" id="fig|502800.11.peg.1915"/>
<dbReference type="GO" id="GO:1990230">
    <property type="term" value="C:iron-sulfur cluster transfer complex"/>
    <property type="evidence" value="ECO:0007669"/>
    <property type="project" value="TreeGrafter"/>
</dbReference>
<dbReference type="GO" id="GO:0001671">
    <property type="term" value="F:ATPase activator activity"/>
    <property type="evidence" value="ECO:0007669"/>
    <property type="project" value="InterPro"/>
</dbReference>
<dbReference type="GO" id="GO:0051087">
    <property type="term" value="F:protein-folding chaperone binding"/>
    <property type="evidence" value="ECO:0007669"/>
    <property type="project" value="InterPro"/>
</dbReference>
<dbReference type="GO" id="GO:0044571">
    <property type="term" value="P:[2Fe-2S] cluster assembly"/>
    <property type="evidence" value="ECO:0007669"/>
    <property type="project" value="InterPro"/>
</dbReference>
<dbReference type="GO" id="GO:0051259">
    <property type="term" value="P:protein complex oligomerization"/>
    <property type="evidence" value="ECO:0007669"/>
    <property type="project" value="InterPro"/>
</dbReference>
<dbReference type="GO" id="GO:0006457">
    <property type="term" value="P:protein folding"/>
    <property type="evidence" value="ECO:0007669"/>
    <property type="project" value="UniProtKB-UniRule"/>
</dbReference>
<dbReference type="CDD" id="cd06257">
    <property type="entry name" value="DnaJ"/>
    <property type="match status" value="1"/>
</dbReference>
<dbReference type="FunFam" id="1.10.287.110:FF:000008">
    <property type="entry name" value="Co-chaperone protein HscB"/>
    <property type="match status" value="1"/>
</dbReference>
<dbReference type="Gene3D" id="1.10.287.110">
    <property type="entry name" value="DnaJ domain"/>
    <property type="match status" value="1"/>
</dbReference>
<dbReference type="Gene3D" id="1.20.1280.20">
    <property type="entry name" value="HscB, C-terminal domain"/>
    <property type="match status" value="1"/>
</dbReference>
<dbReference type="HAMAP" id="MF_00682">
    <property type="entry name" value="HscB"/>
    <property type="match status" value="1"/>
</dbReference>
<dbReference type="InterPro" id="IPR001623">
    <property type="entry name" value="DnaJ_domain"/>
</dbReference>
<dbReference type="InterPro" id="IPR004640">
    <property type="entry name" value="HscB"/>
</dbReference>
<dbReference type="InterPro" id="IPR036386">
    <property type="entry name" value="HscB_C_sf"/>
</dbReference>
<dbReference type="InterPro" id="IPR009073">
    <property type="entry name" value="HscB_oligo_C"/>
</dbReference>
<dbReference type="InterPro" id="IPR036869">
    <property type="entry name" value="J_dom_sf"/>
</dbReference>
<dbReference type="NCBIfam" id="TIGR00714">
    <property type="entry name" value="hscB"/>
    <property type="match status" value="1"/>
</dbReference>
<dbReference type="NCBIfam" id="NF003449">
    <property type="entry name" value="PRK05014.1"/>
    <property type="match status" value="1"/>
</dbReference>
<dbReference type="PANTHER" id="PTHR14021">
    <property type="entry name" value="IRON-SULFUR CLUSTER CO-CHAPERONE PROTEIN HSCB"/>
    <property type="match status" value="1"/>
</dbReference>
<dbReference type="PANTHER" id="PTHR14021:SF15">
    <property type="entry name" value="IRON-SULFUR CLUSTER CO-CHAPERONE PROTEIN HSCB"/>
    <property type="match status" value="1"/>
</dbReference>
<dbReference type="Pfam" id="PF00226">
    <property type="entry name" value="DnaJ"/>
    <property type="match status" value="1"/>
</dbReference>
<dbReference type="Pfam" id="PF07743">
    <property type="entry name" value="HSCB_C"/>
    <property type="match status" value="1"/>
</dbReference>
<dbReference type="SMART" id="SM00271">
    <property type="entry name" value="DnaJ"/>
    <property type="match status" value="1"/>
</dbReference>
<dbReference type="SUPFAM" id="SSF46565">
    <property type="entry name" value="Chaperone J-domain"/>
    <property type="match status" value="1"/>
</dbReference>
<dbReference type="SUPFAM" id="SSF47144">
    <property type="entry name" value="HSC20 (HSCB), C-terminal oligomerisation domain"/>
    <property type="match status" value="1"/>
</dbReference>
<dbReference type="PROSITE" id="PS50076">
    <property type="entry name" value="DNAJ_2"/>
    <property type="match status" value="1"/>
</dbReference>
<gene>
    <name evidence="1" type="primary">hscB</name>
    <name type="ordered locus">YPK_1279</name>
</gene>
<reference key="1">
    <citation type="submission" date="2008-02" db="EMBL/GenBank/DDBJ databases">
        <title>Complete sequence of Yersinia pseudotuberculosis YPIII.</title>
        <authorList>
            <consortium name="US DOE Joint Genome Institute"/>
            <person name="Copeland A."/>
            <person name="Lucas S."/>
            <person name="Lapidus A."/>
            <person name="Glavina del Rio T."/>
            <person name="Dalin E."/>
            <person name="Tice H."/>
            <person name="Bruce D."/>
            <person name="Goodwin L."/>
            <person name="Pitluck S."/>
            <person name="Munk A.C."/>
            <person name="Brettin T."/>
            <person name="Detter J.C."/>
            <person name="Han C."/>
            <person name="Tapia R."/>
            <person name="Schmutz J."/>
            <person name="Larimer F."/>
            <person name="Land M."/>
            <person name="Hauser L."/>
            <person name="Challacombe J.F."/>
            <person name="Green L."/>
            <person name="Lindler L.E."/>
            <person name="Nikolich M.P."/>
            <person name="Richardson P."/>
        </authorList>
    </citation>
    <scope>NUCLEOTIDE SEQUENCE [LARGE SCALE GENOMIC DNA]</scope>
    <source>
        <strain>YPIII</strain>
    </source>
</reference>
<feature type="chain" id="PRO_1000131761" description="Co-chaperone protein HscB">
    <location>
        <begin position="1"/>
        <end position="174"/>
    </location>
</feature>
<feature type="domain" description="J" evidence="1">
    <location>
        <begin position="2"/>
        <end position="74"/>
    </location>
</feature>
<proteinExistence type="inferred from homology"/>
<sequence length="174" mass="20635">MDYFTLFGLPARYLIDGNQLTTRYQELQRQFHPDRFATQPERERLASMQQAATINDAYQTLKHPLKRAEYMLSLQGFDLGNEQHTMRDTAFLMEQLELREELDAIERKPDAETLLAEFSRRVAQMTTTRTQQMVEQLDAQLWVQAADTVRKLRFLDKLQQQVEQLEERLFDDFA</sequence>
<keyword id="KW-0143">Chaperone</keyword>
<comment type="function">
    <text evidence="1">Co-chaperone involved in the maturation of iron-sulfur cluster-containing proteins. Seems to help targeting proteins to be folded toward HscA.</text>
</comment>
<comment type="subunit">
    <text evidence="1">Interacts with HscA and stimulates its ATPase activity. Interacts with IscU.</text>
</comment>
<comment type="similarity">
    <text evidence="1">Belongs to the HscB family.</text>
</comment>
<name>HSCB_YERPY</name>